<dbReference type="EMBL" id="CABZ01068106">
    <property type="status" value="NOT_ANNOTATED_CDS"/>
    <property type="molecule type" value="Genomic_DNA"/>
</dbReference>
<dbReference type="EMBL" id="FP017289">
    <property type="status" value="NOT_ANNOTATED_CDS"/>
    <property type="molecule type" value="Genomic_DNA"/>
</dbReference>
<dbReference type="EMBL" id="CABZ01109567">
    <property type="status" value="NOT_ANNOTATED_CDS"/>
    <property type="molecule type" value="Genomic_DNA"/>
</dbReference>
<dbReference type="SMR" id="E7F555"/>
<dbReference type="FunCoup" id="E7F555">
    <property type="interactions" value="423"/>
</dbReference>
<dbReference type="PaxDb" id="7955-ENSDARP00000107789"/>
<dbReference type="eggNOG" id="ENOG502RXJ2">
    <property type="taxonomic scope" value="Eukaryota"/>
</dbReference>
<dbReference type="InParanoid" id="E7F555"/>
<dbReference type="Proteomes" id="UP000000437">
    <property type="component" value="Unplaced"/>
</dbReference>
<dbReference type="GO" id="GO:0005929">
    <property type="term" value="C:cilium"/>
    <property type="evidence" value="ECO:0000250"/>
    <property type="project" value="UniProtKB"/>
</dbReference>
<dbReference type="GO" id="GO:0005737">
    <property type="term" value="C:cytoplasm"/>
    <property type="evidence" value="ECO:0007669"/>
    <property type="project" value="UniProtKB-KW"/>
</dbReference>
<dbReference type="GO" id="GO:0005856">
    <property type="term" value="C:cytoskeleton"/>
    <property type="evidence" value="ECO:0007669"/>
    <property type="project" value="UniProtKB-SubCell"/>
</dbReference>
<dbReference type="GO" id="GO:0030991">
    <property type="term" value="C:intraciliary transport particle A"/>
    <property type="evidence" value="ECO:0000250"/>
    <property type="project" value="UniProtKB"/>
</dbReference>
<dbReference type="GO" id="GO:0060271">
    <property type="term" value="P:cilium assembly"/>
    <property type="evidence" value="ECO:0000250"/>
    <property type="project" value="UniProtKB"/>
</dbReference>
<dbReference type="GO" id="GO:0035721">
    <property type="term" value="P:intraciliary retrograde transport"/>
    <property type="evidence" value="ECO:0000250"/>
    <property type="project" value="UniProtKB"/>
</dbReference>
<dbReference type="InterPro" id="IPR029302">
    <property type="entry name" value="IFT43"/>
</dbReference>
<dbReference type="PANTHER" id="PTHR33724">
    <property type="entry name" value="INTRAFLAGELLAR TRANSPORT PROTEIN 43 HOMOLOG"/>
    <property type="match status" value="1"/>
</dbReference>
<dbReference type="PANTHER" id="PTHR33724:SF1">
    <property type="entry name" value="INTRAFLAGELLAR TRANSPORT PROTEIN 43 HOMOLOG"/>
    <property type="match status" value="1"/>
</dbReference>
<dbReference type="Pfam" id="PF15305">
    <property type="entry name" value="IFT43"/>
    <property type="match status" value="1"/>
</dbReference>
<accession>E7F555</accession>
<accession>E7F0H2</accession>
<sequence length="208" mass="23271">MDDNLQLADGGFTKNVARSGRRARQSAEMMSAEDSRQRRSSSSISTAAEGPPPKPTRRQGGWAEESSTTTNVRSGRRAAAEEPEDRRLRPQTPEGSDNESGEDIPVIPDLEEVQEEDLTMQIAAPPSVQVNRVMTYRDLDNDLMKFSAFQTLDGEIDLKLLTKVLAPEQEVREEDVGWDWDHLEVSSELQSEWDEGDREDQSPLPVCV</sequence>
<reference key="1">
    <citation type="journal article" date="2013" name="Nature">
        <title>The zebrafish reference genome sequence and its relationship to the human genome.</title>
        <authorList>
            <person name="Howe K."/>
            <person name="Clark M.D."/>
            <person name="Torroja C.F."/>
            <person name="Torrance J."/>
            <person name="Berthelot C."/>
            <person name="Muffato M."/>
            <person name="Collins J.E."/>
            <person name="Humphray S."/>
            <person name="McLaren K."/>
            <person name="Matthews L."/>
            <person name="McLaren S."/>
            <person name="Sealy I."/>
            <person name="Caccamo M."/>
            <person name="Churcher C."/>
            <person name="Scott C."/>
            <person name="Barrett J.C."/>
            <person name="Koch R."/>
            <person name="Rauch G.J."/>
            <person name="White S."/>
            <person name="Chow W."/>
            <person name="Kilian B."/>
            <person name="Quintais L.T."/>
            <person name="Guerra-Assuncao J.A."/>
            <person name="Zhou Y."/>
            <person name="Gu Y."/>
            <person name="Yen J."/>
            <person name="Vogel J.H."/>
            <person name="Eyre T."/>
            <person name="Redmond S."/>
            <person name="Banerjee R."/>
            <person name="Chi J."/>
            <person name="Fu B."/>
            <person name="Langley E."/>
            <person name="Maguire S.F."/>
            <person name="Laird G.K."/>
            <person name="Lloyd D."/>
            <person name="Kenyon E."/>
            <person name="Donaldson S."/>
            <person name="Sehra H."/>
            <person name="Almeida-King J."/>
            <person name="Loveland J."/>
            <person name="Trevanion S."/>
            <person name="Jones M."/>
            <person name="Quail M."/>
            <person name="Willey D."/>
            <person name="Hunt A."/>
            <person name="Burton J."/>
            <person name="Sims S."/>
            <person name="McLay K."/>
            <person name="Plumb B."/>
            <person name="Davis J."/>
            <person name="Clee C."/>
            <person name="Oliver K."/>
            <person name="Clark R."/>
            <person name="Riddle C."/>
            <person name="Elliot D."/>
            <person name="Threadgold G."/>
            <person name="Harden G."/>
            <person name="Ware D."/>
            <person name="Begum S."/>
            <person name="Mortimore B."/>
            <person name="Kerry G."/>
            <person name="Heath P."/>
            <person name="Phillimore B."/>
            <person name="Tracey A."/>
            <person name="Corby N."/>
            <person name="Dunn M."/>
            <person name="Johnson C."/>
            <person name="Wood J."/>
            <person name="Clark S."/>
            <person name="Pelan S."/>
            <person name="Griffiths G."/>
            <person name="Smith M."/>
            <person name="Glithero R."/>
            <person name="Howden P."/>
            <person name="Barker N."/>
            <person name="Lloyd C."/>
            <person name="Stevens C."/>
            <person name="Harley J."/>
            <person name="Holt K."/>
            <person name="Panagiotidis G."/>
            <person name="Lovell J."/>
            <person name="Beasley H."/>
            <person name="Henderson C."/>
            <person name="Gordon D."/>
            <person name="Auger K."/>
            <person name="Wright D."/>
            <person name="Collins J."/>
            <person name="Raisen C."/>
            <person name="Dyer L."/>
            <person name="Leung K."/>
            <person name="Robertson L."/>
            <person name="Ambridge K."/>
            <person name="Leongamornlert D."/>
            <person name="McGuire S."/>
            <person name="Gilderthorp R."/>
            <person name="Griffiths C."/>
            <person name="Manthravadi D."/>
            <person name="Nichol S."/>
            <person name="Barker G."/>
            <person name="Whitehead S."/>
            <person name="Kay M."/>
            <person name="Brown J."/>
            <person name="Murnane C."/>
            <person name="Gray E."/>
            <person name="Humphries M."/>
            <person name="Sycamore N."/>
            <person name="Barker D."/>
            <person name="Saunders D."/>
            <person name="Wallis J."/>
            <person name="Babbage A."/>
            <person name="Hammond S."/>
            <person name="Mashreghi-Mohammadi M."/>
            <person name="Barr L."/>
            <person name="Martin S."/>
            <person name="Wray P."/>
            <person name="Ellington A."/>
            <person name="Matthews N."/>
            <person name="Ellwood M."/>
            <person name="Woodmansey R."/>
            <person name="Clark G."/>
            <person name="Cooper J."/>
            <person name="Tromans A."/>
            <person name="Grafham D."/>
            <person name="Skuce C."/>
            <person name="Pandian R."/>
            <person name="Andrews R."/>
            <person name="Harrison E."/>
            <person name="Kimberley A."/>
            <person name="Garnett J."/>
            <person name="Fosker N."/>
            <person name="Hall R."/>
            <person name="Garner P."/>
            <person name="Kelly D."/>
            <person name="Bird C."/>
            <person name="Palmer S."/>
            <person name="Gehring I."/>
            <person name="Berger A."/>
            <person name="Dooley C.M."/>
            <person name="Ersan-Urun Z."/>
            <person name="Eser C."/>
            <person name="Geiger H."/>
            <person name="Geisler M."/>
            <person name="Karotki L."/>
            <person name="Kirn A."/>
            <person name="Konantz J."/>
            <person name="Konantz M."/>
            <person name="Oberlander M."/>
            <person name="Rudolph-Geiger S."/>
            <person name="Teucke M."/>
            <person name="Lanz C."/>
            <person name="Raddatz G."/>
            <person name="Osoegawa K."/>
            <person name="Zhu B."/>
            <person name="Rapp A."/>
            <person name="Widaa S."/>
            <person name="Langford C."/>
            <person name="Yang F."/>
            <person name="Schuster S.C."/>
            <person name="Carter N.P."/>
            <person name="Harrow J."/>
            <person name="Ning Z."/>
            <person name="Herrero J."/>
            <person name="Searle S.M."/>
            <person name="Enright A."/>
            <person name="Geisler R."/>
            <person name="Plasterk R.H."/>
            <person name="Lee C."/>
            <person name="Westerfield M."/>
            <person name="de Jong P.J."/>
            <person name="Zon L.I."/>
            <person name="Postlethwait J.H."/>
            <person name="Nusslein-Volhard C."/>
            <person name="Hubbard T.J."/>
            <person name="Roest Crollius H."/>
            <person name="Rogers J."/>
            <person name="Stemple D.L."/>
        </authorList>
    </citation>
    <scope>NUCLEOTIDE SEQUENCE [LARGE SCALE GENOMIC DNA]</scope>
    <source>
        <strain>Tuebingen</strain>
    </source>
</reference>
<gene>
    <name type="primary">ift43</name>
</gene>
<keyword id="KW-0966">Cell projection</keyword>
<keyword id="KW-0970">Cilium biogenesis/degradation</keyword>
<keyword id="KW-0963">Cytoplasm</keyword>
<keyword id="KW-0206">Cytoskeleton</keyword>
<keyword id="KW-1185">Reference proteome</keyword>
<organism>
    <name type="scientific">Danio rerio</name>
    <name type="common">Zebrafish</name>
    <name type="synonym">Brachydanio rerio</name>
    <dbReference type="NCBI Taxonomy" id="7955"/>
    <lineage>
        <taxon>Eukaryota</taxon>
        <taxon>Metazoa</taxon>
        <taxon>Chordata</taxon>
        <taxon>Craniata</taxon>
        <taxon>Vertebrata</taxon>
        <taxon>Euteleostomi</taxon>
        <taxon>Actinopterygii</taxon>
        <taxon>Neopterygii</taxon>
        <taxon>Teleostei</taxon>
        <taxon>Ostariophysi</taxon>
        <taxon>Cypriniformes</taxon>
        <taxon>Danionidae</taxon>
        <taxon>Danioninae</taxon>
        <taxon>Danio</taxon>
    </lineage>
</organism>
<comment type="function">
    <text evidence="1">As a component of IFT complex A (IFT-A), a complex required for retrograde ciliary transport and entry into cilia of G protein-coupled receptors (GPCRs), it is involved in ciliogenesis. Involved in retrograde ciliary transport along microtubules from the ciliary tip to the base.</text>
</comment>
<comment type="subunit">
    <text evidence="1">Component of the IFT complex A (IFT-A) complex.</text>
</comment>
<comment type="subcellular location">
    <subcellularLocation>
        <location evidence="1">Cytoplasm</location>
        <location evidence="1">Cytoskeleton</location>
    </subcellularLocation>
    <subcellularLocation>
        <location evidence="1">Cell projection</location>
        <location evidence="1">Cilium</location>
    </subcellularLocation>
    <text evidence="1">Associated with microtubules. Localized at the distal tip of the cilium.</text>
</comment>
<comment type="similarity">
    <text evidence="3">Belongs to the IFT43 family.</text>
</comment>
<protein>
    <recommendedName>
        <fullName>Intraflagellar transport protein 43 homolog</fullName>
    </recommendedName>
</protein>
<proteinExistence type="inferred from homology"/>
<evidence type="ECO:0000250" key="1">
    <source>
        <dbReference type="UniProtKB" id="Q96FT9"/>
    </source>
</evidence>
<evidence type="ECO:0000256" key="2">
    <source>
        <dbReference type="SAM" id="MobiDB-lite"/>
    </source>
</evidence>
<evidence type="ECO:0000305" key="3"/>
<feature type="chain" id="PRO_0000409496" description="Intraflagellar transport protein 43 homolog">
    <location>
        <begin position="1"/>
        <end position="208"/>
    </location>
</feature>
<feature type="region of interest" description="Disordered" evidence="2">
    <location>
        <begin position="1"/>
        <end position="105"/>
    </location>
</feature>
<feature type="region of interest" description="Disordered" evidence="2">
    <location>
        <begin position="187"/>
        <end position="208"/>
    </location>
</feature>
<feature type="compositionally biased region" description="Basic and acidic residues" evidence="2">
    <location>
        <begin position="78"/>
        <end position="88"/>
    </location>
</feature>
<name>IFT43_DANRE</name>